<feature type="chain" id="PRO_1000059808" description="ATP-dependent 6-phosphofructokinase">
    <location>
        <begin position="1"/>
        <end position="320"/>
    </location>
</feature>
<feature type="active site" description="Proton acceptor" evidence="1">
    <location>
        <position position="128"/>
    </location>
</feature>
<feature type="binding site" evidence="1">
    <location>
        <position position="12"/>
    </location>
    <ligand>
        <name>ATP</name>
        <dbReference type="ChEBI" id="CHEBI:30616"/>
    </ligand>
</feature>
<feature type="binding site" evidence="1">
    <location>
        <begin position="22"/>
        <end position="26"/>
    </location>
    <ligand>
        <name>ADP</name>
        <dbReference type="ChEBI" id="CHEBI:456216"/>
        <note>allosteric activator; ligand shared between dimeric partners</note>
    </ligand>
</feature>
<feature type="binding site" evidence="1">
    <location>
        <begin position="73"/>
        <end position="74"/>
    </location>
    <ligand>
        <name>ATP</name>
        <dbReference type="ChEBI" id="CHEBI:30616"/>
    </ligand>
</feature>
<feature type="binding site" evidence="1">
    <location>
        <begin position="103"/>
        <end position="106"/>
    </location>
    <ligand>
        <name>ATP</name>
        <dbReference type="ChEBI" id="CHEBI:30616"/>
    </ligand>
</feature>
<feature type="binding site" evidence="1">
    <location>
        <position position="104"/>
    </location>
    <ligand>
        <name>Mg(2+)</name>
        <dbReference type="ChEBI" id="CHEBI:18420"/>
        <note>catalytic</note>
    </ligand>
</feature>
<feature type="binding site" description="in other chain" evidence="1">
    <location>
        <begin position="126"/>
        <end position="128"/>
    </location>
    <ligand>
        <name>substrate</name>
        <note>ligand shared between dimeric partners</note>
    </ligand>
</feature>
<feature type="binding site" description="in other chain" evidence="1">
    <location>
        <position position="155"/>
    </location>
    <ligand>
        <name>ADP</name>
        <dbReference type="ChEBI" id="CHEBI:456216"/>
        <note>allosteric activator; ligand shared between dimeric partners</note>
    </ligand>
</feature>
<feature type="binding site" evidence="1">
    <location>
        <position position="163"/>
    </location>
    <ligand>
        <name>substrate</name>
        <note>ligand shared between dimeric partners</note>
    </ligand>
</feature>
<feature type="binding site" description="in other chain" evidence="1">
    <location>
        <begin position="170"/>
        <end position="172"/>
    </location>
    <ligand>
        <name>substrate</name>
        <note>ligand shared between dimeric partners</note>
    </ligand>
</feature>
<feature type="binding site" description="in other chain" evidence="1">
    <location>
        <begin position="186"/>
        <end position="188"/>
    </location>
    <ligand>
        <name>ADP</name>
        <dbReference type="ChEBI" id="CHEBI:456216"/>
        <note>allosteric activator; ligand shared between dimeric partners</note>
    </ligand>
</feature>
<feature type="binding site" description="in other chain" evidence="1">
    <location>
        <position position="212"/>
    </location>
    <ligand>
        <name>ADP</name>
        <dbReference type="ChEBI" id="CHEBI:456216"/>
        <note>allosteric activator; ligand shared between dimeric partners</note>
    </ligand>
</feature>
<feature type="binding site" description="in other chain" evidence="1">
    <location>
        <begin position="214"/>
        <end position="216"/>
    </location>
    <ligand>
        <name>ADP</name>
        <dbReference type="ChEBI" id="CHEBI:456216"/>
        <note>allosteric activator; ligand shared between dimeric partners</note>
    </ligand>
</feature>
<feature type="binding site" description="in other chain" evidence="1">
    <location>
        <position position="223"/>
    </location>
    <ligand>
        <name>substrate</name>
        <note>ligand shared between dimeric partners</note>
    </ligand>
</feature>
<feature type="binding site" evidence="1">
    <location>
        <position position="244"/>
    </location>
    <ligand>
        <name>substrate</name>
        <note>ligand shared between dimeric partners</note>
    </ligand>
</feature>
<feature type="binding site" description="in other chain" evidence="1">
    <location>
        <begin position="250"/>
        <end position="253"/>
    </location>
    <ligand>
        <name>substrate</name>
        <note>ligand shared between dimeric partners</note>
    </ligand>
</feature>
<organism>
    <name type="scientific">Vibrio campbellii (strain ATCC BAA-1116)</name>
    <dbReference type="NCBI Taxonomy" id="2902295"/>
    <lineage>
        <taxon>Bacteria</taxon>
        <taxon>Pseudomonadati</taxon>
        <taxon>Pseudomonadota</taxon>
        <taxon>Gammaproteobacteria</taxon>
        <taxon>Vibrionales</taxon>
        <taxon>Vibrionaceae</taxon>
        <taxon>Vibrio</taxon>
    </lineage>
</organism>
<protein>
    <recommendedName>
        <fullName evidence="1">ATP-dependent 6-phosphofructokinase</fullName>
        <shortName evidence="1">ATP-PFK</shortName>
        <shortName evidence="1">Phosphofructokinase</shortName>
        <ecNumber evidence="1">2.7.1.11</ecNumber>
    </recommendedName>
    <alternativeName>
        <fullName evidence="1">Phosphohexokinase</fullName>
    </alternativeName>
</protein>
<evidence type="ECO:0000255" key="1">
    <source>
        <dbReference type="HAMAP-Rule" id="MF_00339"/>
    </source>
</evidence>
<comment type="function">
    <text evidence="1">Catalyzes the phosphorylation of D-fructose 6-phosphate to fructose 1,6-bisphosphate by ATP, the first committing step of glycolysis.</text>
</comment>
<comment type="catalytic activity">
    <reaction evidence="1">
        <text>beta-D-fructose 6-phosphate + ATP = beta-D-fructose 1,6-bisphosphate + ADP + H(+)</text>
        <dbReference type="Rhea" id="RHEA:16109"/>
        <dbReference type="ChEBI" id="CHEBI:15378"/>
        <dbReference type="ChEBI" id="CHEBI:30616"/>
        <dbReference type="ChEBI" id="CHEBI:32966"/>
        <dbReference type="ChEBI" id="CHEBI:57634"/>
        <dbReference type="ChEBI" id="CHEBI:456216"/>
        <dbReference type="EC" id="2.7.1.11"/>
    </reaction>
</comment>
<comment type="cofactor">
    <cofactor evidence="1">
        <name>Mg(2+)</name>
        <dbReference type="ChEBI" id="CHEBI:18420"/>
    </cofactor>
</comment>
<comment type="activity regulation">
    <text evidence="1">Allosterically activated by ADP and other diphosphonucleosides, and allosterically inhibited by phosphoenolpyruvate.</text>
</comment>
<comment type="pathway">
    <text evidence="1">Carbohydrate degradation; glycolysis; D-glyceraldehyde 3-phosphate and glycerone phosphate from D-glucose: step 3/4.</text>
</comment>
<comment type="subunit">
    <text evidence="1">Homotetramer.</text>
</comment>
<comment type="subcellular location">
    <subcellularLocation>
        <location evidence="1">Cytoplasm</location>
    </subcellularLocation>
</comment>
<comment type="similarity">
    <text evidence="1">Belongs to the phosphofructokinase type A (PFKA) family. ATP-dependent PFK group I subfamily. Prokaryotic clade 'B1' sub-subfamily.</text>
</comment>
<dbReference type="EC" id="2.7.1.11" evidence="1"/>
<dbReference type="EMBL" id="CP000789">
    <property type="protein sequence ID" value="ABU69193.1"/>
    <property type="molecule type" value="Genomic_DNA"/>
</dbReference>
<dbReference type="RefSeq" id="WP_005530910.1">
    <property type="nucleotide sequence ID" value="NC_009783.1"/>
</dbReference>
<dbReference type="SMR" id="A7MX59"/>
<dbReference type="KEGG" id="vha:VIBHAR_00145"/>
<dbReference type="PATRIC" id="fig|338187.25.peg.2388"/>
<dbReference type="UniPathway" id="UPA00109">
    <property type="reaction ID" value="UER00182"/>
</dbReference>
<dbReference type="Proteomes" id="UP000008152">
    <property type="component" value="Chromosome I"/>
</dbReference>
<dbReference type="GO" id="GO:0005945">
    <property type="term" value="C:6-phosphofructokinase complex"/>
    <property type="evidence" value="ECO:0007669"/>
    <property type="project" value="TreeGrafter"/>
</dbReference>
<dbReference type="GO" id="GO:0003872">
    <property type="term" value="F:6-phosphofructokinase activity"/>
    <property type="evidence" value="ECO:0007669"/>
    <property type="project" value="UniProtKB-UniRule"/>
</dbReference>
<dbReference type="GO" id="GO:0016208">
    <property type="term" value="F:AMP binding"/>
    <property type="evidence" value="ECO:0007669"/>
    <property type="project" value="TreeGrafter"/>
</dbReference>
<dbReference type="GO" id="GO:0005524">
    <property type="term" value="F:ATP binding"/>
    <property type="evidence" value="ECO:0007669"/>
    <property type="project" value="UniProtKB-KW"/>
</dbReference>
<dbReference type="GO" id="GO:0070095">
    <property type="term" value="F:fructose-6-phosphate binding"/>
    <property type="evidence" value="ECO:0007669"/>
    <property type="project" value="TreeGrafter"/>
</dbReference>
<dbReference type="GO" id="GO:0042802">
    <property type="term" value="F:identical protein binding"/>
    <property type="evidence" value="ECO:0007669"/>
    <property type="project" value="TreeGrafter"/>
</dbReference>
<dbReference type="GO" id="GO:0046872">
    <property type="term" value="F:metal ion binding"/>
    <property type="evidence" value="ECO:0007669"/>
    <property type="project" value="UniProtKB-KW"/>
</dbReference>
<dbReference type="GO" id="GO:0048029">
    <property type="term" value="F:monosaccharide binding"/>
    <property type="evidence" value="ECO:0007669"/>
    <property type="project" value="TreeGrafter"/>
</dbReference>
<dbReference type="GO" id="GO:0061621">
    <property type="term" value="P:canonical glycolysis"/>
    <property type="evidence" value="ECO:0007669"/>
    <property type="project" value="TreeGrafter"/>
</dbReference>
<dbReference type="GO" id="GO:0030388">
    <property type="term" value="P:fructose 1,6-bisphosphate metabolic process"/>
    <property type="evidence" value="ECO:0007669"/>
    <property type="project" value="TreeGrafter"/>
</dbReference>
<dbReference type="GO" id="GO:0006002">
    <property type="term" value="P:fructose 6-phosphate metabolic process"/>
    <property type="evidence" value="ECO:0007669"/>
    <property type="project" value="InterPro"/>
</dbReference>
<dbReference type="CDD" id="cd00763">
    <property type="entry name" value="Bacterial_PFK"/>
    <property type="match status" value="1"/>
</dbReference>
<dbReference type="FunFam" id="3.40.50.450:FF:000001">
    <property type="entry name" value="ATP-dependent 6-phosphofructokinase"/>
    <property type="match status" value="1"/>
</dbReference>
<dbReference type="FunFam" id="3.40.50.460:FF:000002">
    <property type="entry name" value="ATP-dependent 6-phosphofructokinase"/>
    <property type="match status" value="1"/>
</dbReference>
<dbReference type="Gene3D" id="3.40.50.450">
    <property type="match status" value="1"/>
</dbReference>
<dbReference type="Gene3D" id="3.40.50.460">
    <property type="entry name" value="Phosphofructokinase domain"/>
    <property type="match status" value="1"/>
</dbReference>
<dbReference type="HAMAP" id="MF_00339">
    <property type="entry name" value="Phosphofructokinase_I_B1"/>
    <property type="match status" value="1"/>
</dbReference>
<dbReference type="InterPro" id="IPR022953">
    <property type="entry name" value="ATP_PFK"/>
</dbReference>
<dbReference type="InterPro" id="IPR012003">
    <property type="entry name" value="ATP_PFK_prok-type"/>
</dbReference>
<dbReference type="InterPro" id="IPR012828">
    <property type="entry name" value="PFKA_ATP_prok"/>
</dbReference>
<dbReference type="InterPro" id="IPR015912">
    <property type="entry name" value="Phosphofructokinase_CS"/>
</dbReference>
<dbReference type="InterPro" id="IPR000023">
    <property type="entry name" value="Phosphofructokinase_dom"/>
</dbReference>
<dbReference type="InterPro" id="IPR035966">
    <property type="entry name" value="PKF_sf"/>
</dbReference>
<dbReference type="NCBIfam" id="TIGR02482">
    <property type="entry name" value="PFKA_ATP"/>
    <property type="match status" value="1"/>
</dbReference>
<dbReference type="NCBIfam" id="NF002872">
    <property type="entry name" value="PRK03202.1"/>
    <property type="match status" value="1"/>
</dbReference>
<dbReference type="PANTHER" id="PTHR13697:SF4">
    <property type="entry name" value="ATP-DEPENDENT 6-PHOSPHOFRUCTOKINASE"/>
    <property type="match status" value="1"/>
</dbReference>
<dbReference type="PANTHER" id="PTHR13697">
    <property type="entry name" value="PHOSPHOFRUCTOKINASE"/>
    <property type="match status" value="1"/>
</dbReference>
<dbReference type="Pfam" id="PF00365">
    <property type="entry name" value="PFK"/>
    <property type="match status" value="1"/>
</dbReference>
<dbReference type="PIRSF" id="PIRSF000532">
    <property type="entry name" value="ATP_PFK_prok"/>
    <property type="match status" value="1"/>
</dbReference>
<dbReference type="PRINTS" id="PR00476">
    <property type="entry name" value="PHFRCTKINASE"/>
</dbReference>
<dbReference type="SUPFAM" id="SSF53784">
    <property type="entry name" value="Phosphofructokinase"/>
    <property type="match status" value="1"/>
</dbReference>
<dbReference type="PROSITE" id="PS00433">
    <property type="entry name" value="PHOSPHOFRUCTOKINASE"/>
    <property type="match status" value="1"/>
</dbReference>
<proteinExistence type="inferred from homology"/>
<reference key="1">
    <citation type="submission" date="2007-08" db="EMBL/GenBank/DDBJ databases">
        <authorList>
            <consortium name="The Vibrio harveyi Genome Sequencing Project"/>
            <person name="Bassler B."/>
            <person name="Clifton S.W."/>
            <person name="Fulton L."/>
            <person name="Delehaunty K."/>
            <person name="Fronick C."/>
            <person name="Harrison M."/>
            <person name="Markivic C."/>
            <person name="Fulton R."/>
            <person name="Tin-Wollam A.-M."/>
            <person name="Shah N."/>
            <person name="Pepin K."/>
            <person name="Nash W."/>
            <person name="Thiruvilangam P."/>
            <person name="Bhonagiri V."/>
            <person name="Waters C."/>
            <person name="Tu K.C."/>
            <person name="Irgon J."/>
            <person name="Wilson R.K."/>
        </authorList>
    </citation>
    <scope>NUCLEOTIDE SEQUENCE [LARGE SCALE GENOMIC DNA]</scope>
    <source>
        <strain>ATCC BAA-1116 / BB120</strain>
    </source>
</reference>
<gene>
    <name evidence="1" type="primary">pfkA</name>
    <name type="ordered locus">VIBHAR_00145</name>
</gene>
<name>PFKA_VIBC1</name>
<keyword id="KW-0021">Allosteric enzyme</keyword>
<keyword id="KW-0067">ATP-binding</keyword>
<keyword id="KW-0963">Cytoplasm</keyword>
<keyword id="KW-0324">Glycolysis</keyword>
<keyword id="KW-0418">Kinase</keyword>
<keyword id="KW-0460">Magnesium</keyword>
<keyword id="KW-0479">Metal-binding</keyword>
<keyword id="KW-0547">Nucleotide-binding</keyword>
<keyword id="KW-0808">Transferase</keyword>
<sequence>MIKKIGVLTSGGDAPGMNAAVRGVVRTALSEGLEVYGVYDGYLGLYEGRIEKLDRSSVSDVINKGGTFLGSARFPEFKEVEVREQAIENLKKHGIDALVVIGGDGSYMGAKKLTEMGYPCIGLPGTIDNDIAGTDYTIGYLTALNTVIDAIDRLRDTSSSHQRISIVEIMGRHCGDLTLMSAIAGGCEYIITPETGLDKDKLIKNIQDGIAKGKKHAIIALTELMMDANELAREIEAATGRETRATVLGHIQRGGRPAAFDRVLASRMGNYAVHLLMEGHGGRCVGIVKEQLVHHDIIDAIENMKRPVRSDLYQVAEELF</sequence>
<accession>A7MX59</accession>